<gene>
    <name evidence="1" type="primary">rplT</name>
    <name type="ordered locus">Rsph17029_0410</name>
</gene>
<protein>
    <recommendedName>
        <fullName evidence="1">Large ribosomal subunit protein bL20</fullName>
    </recommendedName>
    <alternativeName>
        <fullName evidence="2">50S ribosomal protein L20</fullName>
    </alternativeName>
</protein>
<evidence type="ECO:0000255" key="1">
    <source>
        <dbReference type="HAMAP-Rule" id="MF_00382"/>
    </source>
</evidence>
<evidence type="ECO:0000305" key="2"/>
<keyword id="KW-0687">Ribonucleoprotein</keyword>
<keyword id="KW-0689">Ribosomal protein</keyword>
<keyword id="KW-0694">RNA-binding</keyword>
<keyword id="KW-0699">rRNA-binding</keyword>
<dbReference type="EMBL" id="CP000577">
    <property type="protein sequence ID" value="ABN75526.1"/>
    <property type="molecule type" value="Genomic_DNA"/>
</dbReference>
<dbReference type="RefSeq" id="WP_002722591.1">
    <property type="nucleotide sequence ID" value="NC_009049.1"/>
</dbReference>
<dbReference type="SMR" id="A3PGR0"/>
<dbReference type="GeneID" id="67445550"/>
<dbReference type="KEGG" id="rsh:Rsph17029_0410"/>
<dbReference type="HOGENOM" id="CLU_123265_0_1_5"/>
<dbReference type="GO" id="GO:1990904">
    <property type="term" value="C:ribonucleoprotein complex"/>
    <property type="evidence" value="ECO:0007669"/>
    <property type="project" value="UniProtKB-KW"/>
</dbReference>
<dbReference type="GO" id="GO:0005840">
    <property type="term" value="C:ribosome"/>
    <property type="evidence" value="ECO:0007669"/>
    <property type="project" value="UniProtKB-KW"/>
</dbReference>
<dbReference type="GO" id="GO:0019843">
    <property type="term" value="F:rRNA binding"/>
    <property type="evidence" value="ECO:0007669"/>
    <property type="project" value="UniProtKB-UniRule"/>
</dbReference>
<dbReference type="GO" id="GO:0003735">
    <property type="term" value="F:structural constituent of ribosome"/>
    <property type="evidence" value="ECO:0007669"/>
    <property type="project" value="InterPro"/>
</dbReference>
<dbReference type="GO" id="GO:0000027">
    <property type="term" value="P:ribosomal large subunit assembly"/>
    <property type="evidence" value="ECO:0007669"/>
    <property type="project" value="UniProtKB-UniRule"/>
</dbReference>
<dbReference type="GO" id="GO:0006412">
    <property type="term" value="P:translation"/>
    <property type="evidence" value="ECO:0007669"/>
    <property type="project" value="InterPro"/>
</dbReference>
<dbReference type="CDD" id="cd07026">
    <property type="entry name" value="Ribosomal_L20"/>
    <property type="match status" value="1"/>
</dbReference>
<dbReference type="FunFam" id="1.10.1900.20:FF:000001">
    <property type="entry name" value="50S ribosomal protein L20"/>
    <property type="match status" value="1"/>
</dbReference>
<dbReference type="Gene3D" id="6.10.160.10">
    <property type="match status" value="1"/>
</dbReference>
<dbReference type="Gene3D" id="1.10.1900.20">
    <property type="entry name" value="Ribosomal protein L20"/>
    <property type="match status" value="1"/>
</dbReference>
<dbReference type="HAMAP" id="MF_00382">
    <property type="entry name" value="Ribosomal_bL20"/>
    <property type="match status" value="1"/>
</dbReference>
<dbReference type="InterPro" id="IPR005813">
    <property type="entry name" value="Ribosomal_bL20"/>
</dbReference>
<dbReference type="InterPro" id="IPR049946">
    <property type="entry name" value="RIBOSOMAL_L20_CS"/>
</dbReference>
<dbReference type="InterPro" id="IPR035566">
    <property type="entry name" value="Ribosomal_protein_bL20_C"/>
</dbReference>
<dbReference type="NCBIfam" id="TIGR01032">
    <property type="entry name" value="rplT_bact"/>
    <property type="match status" value="1"/>
</dbReference>
<dbReference type="PANTHER" id="PTHR10986">
    <property type="entry name" value="39S RIBOSOMAL PROTEIN L20"/>
    <property type="match status" value="1"/>
</dbReference>
<dbReference type="Pfam" id="PF00453">
    <property type="entry name" value="Ribosomal_L20"/>
    <property type="match status" value="1"/>
</dbReference>
<dbReference type="PRINTS" id="PR00062">
    <property type="entry name" value="RIBOSOMALL20"/>
</dbReference>
<dbReference type="SUPFAM" id="SSF74731">
    <property type="entry name" value="Ribosomal protein L20"/>
    <property type="match status" value="1"/>
</dbReference>
<dbReference type="PROSITE" id="PS00937">
    <property type="entry name" value="RIBOSOMAL_L20"/>
    <property type="match status" value="1"/>
</dbReference>
<organism>
    <name type="scientific">Cereibacter sphaeroides (strain ATCC 17029 / ATH 2.4.9)</name>
    <name type="common">Rhodobacter sphaeroides</name>
    <dbReference type="NCBI Taxonomy" id="349101"/>
    <lineage>
        <taxon>Bacteria</taxon>
        <taxon>Pseudomonadati</taxon>
        <taxon>Pseudomonadota</taxon>
        <taxon>Alphaproteobacteria</taxon>
        <taxon>Rhodobacterales</taxon>
        <taxon>Paracoccaceae</taxon>
        <taxon>Cereibacter</taxon>
    </lineage>
</organism>
<name>RL20_CERS1</name>
<sequence length="120" mass="13547">MSRVKSGKVTHARHRKVIKQAKGYYAARSTNFRTATQAVDKANQYATRDRKARKRNFRALWIQRINAAVRLFDIEMTYSRFINGLSKAGIEVDRKVLADLAVHEPEAFNAIAAQAKAALA</sequence>
<comment type="function">
    <text evidence="1">Binds directly to 23S ribosomal RNA and is necessary for the in vitro assembly process of the 50S ribosomal subunit. It is not involved in the protein synthesizing functions of that subunit.</text>
</comment>
<comment type="similarity">
    <text evidence="1">Belongs to the bacterial ribosomal protein bL20 family.</text>
</comment>
<proteinExistence type="inferred from homology"/>
<accession>A3PGR0</accession>
<feature type="chain" id="PRO_1000049051" description="Large ribosomal subunit protein bL20">
    <location>
        <begin position="1"/>
        <end position="120"/>
    </location>
</feature>
<reference key="1">
    <citation type="submission" date="2007-02" db="EMBL/GenBank/DDBJ databases">
        <title>Complete sequence of chromosome 1 of Rhodobacter sphaeroides ATCC 17029.</title>
        <authorList>
            <person name="Copeland A."/>
            <person name="Lucas S."/>
            <person name="Lapidus A."/>
            <person name="Barry K."/>
            <person name="Detter J.C."/>
            <person name="Glavina del Rio T."/>
            <person name="Hammon N."/>
            <person name="Israni S."/>
            <person name="Dalin E."/>
            <person name="Tice H."/>
            <person name="Pitluck S."/>
            <person name="Kiss H."/>
            <person name="Brettin T."/>
            <person name="Bruce D."/>
            <person name="Han C."/>
            <person name="Tapia R."/>
            <person name="Gilna P."/>
            <person name="Schmutz J."/>
            <person name="Larimer F."/>
            <person name="Land M."/>
            <person name="Hauser L."/>
            <person name="Kyrpides N."/>
            <person name="Mikhailova N."/>
            <person name="Richardson P."/>
            <person name="Mackenzie C."/>
            <person name="Choudhary M."/>
            <person name="Donohue T.J."/>
            <person name="Kaplan S."/>
        </authorList>
    </citation>
    <scope>NUCLEOTIDE SEQUENCE [LARGE SCALE GENOMIC DNA]</scope>
    <source>
        <strain>ATCC 17029 / ATH 2.4.9</strain>
    </source>
</reference>